<dbReference type="EMBL" id="AE015925">
    <property type="protein sequence ID" value="AAP05441.1"/>
    <property type="molecule type" value="Genomic_DNA"/>
</dbReference>
<dbReference type="RefSeq" id="WP_006343365.1">
    <property type="nucleotide sequence ID" value="NC_003361.3"/>
</dbReference>
<dbReference type="SMR" id="Q822I3"/>
<dbReference type="STRING" id="227941.CCA_00699"/>
<dbReference type="GeneID" id="93024221"/>
<dbReference type="KEGG" id="cca:CCA_00699"/>
<dbReference type="eggNOG" id="COG0361">
    <property type="taxonomic scope" value="Bacteria"/>
</dbReference>
<dbReference type="HOGENOM" id="CLU_151267_1_0_0"/>
<dbReference type="OrthoDB" id="9803250at2"/>
<dbReference type="Proteomes" id="UP000002193">
    <property type="component" value="Chromosome"/>
</dbReference>
<dbReference type="GO" id="GO:0005829">
    <property type="term" value="C:cytosol"/>
    <property type="evidence" value="ECO:0007669"/>
    <property type="project" value="TreeGrafter"/>
</dbReference>
<dbReference type="GO" id="GO:0043022">
    <property type="term" value="F:ribosome binding"/>
    <property type="evidence" value="ECO:0007669"/>
    <property type="project" value="UniProtKB-UniRule"/>
</dbReference>
<dbReference type="GO" id="GO:0019843">
    <property type="term" value="F:rRNA binding"/>
    <property type="evidence" value="ECO:0007669"/>
    <property type="project" value="UniProtKB-UniRule"/>
</dbReference>
<dbReference type="GO" id="GO:0003743">
    <property type="term" value="F:translation initiation factor activity"/>
    <property type="evidence" value="ECO:0007669"/>
    <property type="project" value="UniProtKB-UniRule"/>
</dbReference>
<dbReference type="CDD" id="cd04451">
    <property type="entry name" value="S1_IF1"/>
    <property type="match status" value="1"/>
</dbReference>
<dbReference type="FunFam" id="2.40.50.140:FF:000002">
    <property type="entry name" value="Translation initiation factor IF-1"/>
    <property type="match status" value="1"/>
</dbReference>
<dbReference type="Gene3D" id="2.40.50.140">
    <property type="entry name" value="Nucleic acid-binding proteins"/>
    <property type="match status" value="1"/>
</dbReference>
<dbReference type="HAMAP" id="MF_00075">
    <property type="entry name" value="IF_1"/>
    <property type="match status" value="1"/>
</dbReference>
<dbReference type="InterPro" id="IPR012340">
    <property type="entry name" value="NA-bd_OB-fold"/>
</dbReference>
<dbReference type="InterPro" id="IPR006196">
    <property type="entry name" value="RNA-binding_domain_S1_IF1"/>
</dbReference>
<dbReference type="InterPro" id="IPR003029">
    <property type="entry name" value="S1_domain"/>
</dbReference>
<dbReference type="InterPro" id="IPR004368">
    <property type="entry name" value="TIF_IF1"/>
</dbReference>
<dbReference type="NCBIfam" id="TIGR00008">
    <property type="entry name" value="infA"/>
    <property type="match status" value="1"/>
</dbReference>
<dbReference type="PANTHER" id="PTHR33370">
    <property type="entry name" value="TRANSLATION INITIATION FACTOR IF-1, CHLOROPLASTIC"/>
    <property type="match status" value="1"/>
</dbReference>
<dbReference type="PANTHER" id="PTHR33370:SF1">
    <property type="entry name" value="TRANSLATION INITIATION FACTOR IF-1, CHLOROPLASTIC"/>
    <property type="match status" value="1"/>
</dbReference>
<dbReference type="Pfam" id="PF01176">
    <property type="entry name" value="eIF-1a"/>
    <property type="match status" value="1"/>
</dbReference>
<dbReference type="SMART" id="SM00316">
    <property type="entry name" value="S1"/>
    <property type="match status" value="1"/>
</dbReference>
<dbReference type="SUPFAM" id="SSF50249">
    <property type="entry name" value="Nucleic acid-binding proteins"/>
    <property type="match status" value="1"/>
</dbReference>
<dbReference type="PROSITE" id="PS50832">
    <property type="entry name" value="S1_IF1_TYPE"/>
    <property type="match status" value="1"/>
</dbReference>
<name>IF1_CHLCV</name>
<feature type="chain" id="PRO_0000095768" description="Translation initiation factor IF-1">
    <location>
        <begin position="1"/>
        <end position="73"/>
    </location>
</feature>
<feature type="domain" description="S1-like" evidence="1">
    <location>
        <begin position="1"/>
        <end position="73"/>
    </location>
</feature>
<keyword id="KW-0963">Cytoplasm</keyword>
<keyword id="KW-0396">Initiation factor</keyword>
<keyword id="KW-0648">Protein biosynthesis</keyword>
<keyword id="KW-0694">RNA-binding</keyword>
<keyword id="KW-0699">rRNA-binding</keyword>
<gene>
    <name evidence="1" type="primary">infA</name>
    <name type="ordered locus">CCA_00699</name>
</gene>
<comment type="function">
    <text evidence="1">One of the essential components for the initiation of protein synthesis. Stabilizes the binding of IF-2 and IF-3 on the 30S subunit to which N-formylmethionyl-tRNA(fMet) subsequently binds. Helps modulate mRNA selection, yielding the 30S pre-initiation complex (PIC). Upon addition of the 50S ribosomal subunit IF-1, IF-2 and IF-3 are released leaving the mature 70S translation initiation complex.</text>
</comment>
<comment type="subunit">
    <text evidence="1">Component of the 30S ribosomal translation pre-initiation complex which assembles on the 30S ribosome in the order IF-2 and IF-3, IF-1 and N-formylmethionyl-tRNA(fMet); mRNA recruitment can occur at any time during PIC assembly.</text>
</comment>
<comment type="subcellular location">
    <subcellularLocation>
        <location evidence="1">Cytoplasm</location>
    </subcellularLocation>
</comment>
<comment type="similarity">
    <text evidence="1">Belongs to the IF-1 family.</text>
</comment>
<evidence type="ECO:0000255" key="1">
    <source>
        <dbReference type="HAMAP-Rule" id="MF_00075"/>
    </source>
</evidence>
<proteinExistence type="inferred from homology"/>
<accession>Q822I3</accession>
<organism>
    <name type="scientific">Chlamydia caviae (strain ATCC VR-813 / DSM 19441 / 03DC25 / GPIC)</name>
    <name type="common">Chlamydophila caviae</name>
    <dbReference type="NCBI Taxonomy" id="227941"/>
    <lineage>
        <taxon>Bacteria</taxon>
        <taxon>Pseudomonadati</taxon>
        <taxon>Chlamydiota</taxon>
        <taxon>Chlamydiia</taxon>
        <taxon>Chlamydiales</taxon>
        <taxon>Chlamydiaceae</taxon>
        <taxon>Chlamydia/Chlamydophila group</taxon>
        <taxon>Chlamydia</taxon>
    </lineage>
</organism>
<sequence length="73" mass="8368">MAKKEDTIVLEGRVQELLPGMHFKILLENGMPVTAHLCGKMRMSNIRLLVGDRVTVEMSAYDLTKARVVYRHR</sequence>
<protein>
    <recommendedName>
        <fullName evidence="1">Translation initiation factor IF-1</fullName>
    </recommendedName>
</protein>
<reference key="1">
    <citation type="journal article" date="2003" name="Nucleic Acids Res.">
        <title>Genome sequence of Chlamydophila caviae (Chlamydia psittaci GPIC): examining the role of niche-specific genes in the evolution of the Chlamydiaceae.</title>
        <authorList>
            <person name="Read T.D."/>
            <person name="Myers G.S.A."/>
            <person name="Brunham R.C."/>
            <person name="Nelson W.C."/>
            <person name="Paulsen I.T."/>
            <person name="Heidelberg J.F."/>
            <person name="Holtzapple E.K."/>
            <person name="Khouri H.M."/>
            <person name="Federova N.B."/>
            <person name="Carty H.A."/>
            <person name="Umayam L.A."/>
            <person name="Haft D.H."/>
            <person name="Peterson J.D."/>
            <person name="Beanan M.J."/>
            <person name="White O."/>
            <person name="Salzberg S.L."/>
            <person name="Hsia R.-C."/>
            <person name="McClarty G."/>
            <person name="Rank R.G."/>
            <person name="Bavoil P.M."/>
            <person name="Fraser C.M."/>
        </authorList>
    </citation>
    <scope>NUCLEOTIDE SEQUENCE [LARGE SCALE GENOMIC DNA]</scope>
    <source>
        <strain>ATCC VR-813 / DSM 19441 / 03DC25 / GPIC</strain>
    </source>
</reference>